<proteinExistence type="inferred from homology"/>
<gene>
    <name evidence="1" type="primary">leuD</name>
    <name type="ordered locus">Sare_1150</name>
</gene>
<dbReference type="EC" id="4.2.1.33" evidence="1"/>
<dbReference type="EMBL" id="CP000850">
    <property type="protein sequence ID" value="ABV97058.1"/>
    <property type="molecule type" value="Genomic_DNA"/>
</dbReference>
<dbReference type="SMR" id="A8M5I4"/>
<dbReference type="STRING" id="391037.Sare_1150"/>
<dbReference type="KEGG" id="saq:Sare_1150"/>
<dbReference type="PATRIC" id="fig|391037.6.peg.1166"/>
<dbReference type="eggNOG" id="COG0066">
    <property type="taxonomic scope" value="Bacteria"/>
</dbReference>
<dbReference type="HOGENOM" id="CLU_081378_0_1_11"/>
<dbReference type="OrthoDB" id="9777465at2"/>
<dbReference type="UniPathway" id="UPA00048">
    <property type="reaction ID" value="UER00071"/>
</dbReference>
<dbReference type="GO" id="GO:0009316">
    <property type="term" value="C:3-isopropylmalate dehydratase complex"/>
    <property type="evidence" value="ECO:0007669"/>
    <property type="project" value="InterPro"/>
</dbReference>
<dbReference type="GO" id="GO:0003861">
    <property type="term" value="F:3-isopropylmalate dehydratase activity"/>
    <property type="evidence" value="ECO:0007669"/>
    <property type="project" value="UniProtKB-UniRule"/>
</dbReference>
<dbReference type="GO" id="GO:0009098">
    <property type="term" value="P:L-leucine biosynthetic process"/>
    <property type="evidence" value="ECO:0007669"/>
    <property type="project" value="UniProtKB-UniRule"/>
</dbReference>
<dbReference type="CDD" id="cd01577">
    <property type="entry name" value="IPMI_Swivel"/>
    <property type="match status" value="1"/>
</dbReference>
<dbReference type="FunFam" id="3.20.19.10:FF:000003">
    <property type="entry name" value="3-isopropylmalate dehydratase small subunit"/>
    <property type="match status" value="1"/>
</dbReference>
<dbReference type="Gene3D" id="3.20.19.10">
    <property type="entry name" value="Aconitase, domain 4"/>
    <property type="match status" value="1"/>
</dbReference>
<dbReference type="HAMAP" id="MF_01031">
    <property type="entry name" value="LeuD_type1"/>
    <property type="match status" value="1"/>
</dbReference>
<dbReference type="InterPro" id="IPR004431">
    <property type="entry name" value="3-IsopropMal_deHydase_ssu"/>
</dbReference>
<dbReference type="InterPro" id="IPR015928">
    <property type="entry name" value="Aconitase/3IPM_dehydase_swvl"/>
</dbReference>
<dbReference type="InterPro" id="IPR000573">
    <property type="entry name" value="AconitaseA/IPMdHydase_ssu_swvl"/>
</dbReference>
<dbReference type="InterPro" id="IPR033940">
    <property type="entry name" value="IPMI_Swivel"/>
</dbReference>
<dbReference type="InterPro" id="IPR050075">
    <property type="entry name" value="LeuD"/>
</dbReference>
<dbReference type="NCBIfam" id="TIGR00171">
    <property type="entry name" value="leuD"/>
    <property type="match status" value="1"/>
</dbReference>
<dbReference type="NCBIfam" id="NF002458">
    <property type="entry name" value="PRK01641.1"/>
    <property type="match status" value="1"/>
</dbReference>
<dbReference type="PANTHER" id="PTHR43345:SF5">
    <property type="entry name" value="3-ISOPROPYLMALATE DEHYDRATASE SMALL SUBUNIT"/>
    <property type="match status" value="1"/>
</dbReference>
<dbReference type="PANTHER" id="PTHR43345">
    <property type="entry name" value="3-ISOPROPYLMALATE DEHYDRATASE SMALL SUBUNIT 2-RELATED-RELATED"/>
    <property type="match status" value="1"/>
</dbReference>
<dbReference type="Pfam" id="PF00694">
    <property type="entry name" value="Aconitase_C"/>
    <property type="match status" value="1"/>
</dbReference>
<dbReference type="SUPFAM" id="SSF52016">
    <property type="entry name" value="LeuD/IlvD-like"/>
    <property type="match status" value="1"/>
</dbReference>
<organism>
    <name type="scientific">Salinispora arenicola (strain CNS-205)</name>
    <dbReference type="NCBI Taxonomy" id="391037"/>
    <lineage>
        <taxon>Bacteria</taxon>
        <taxon>Bacillati</taxon>
        <taxon>Actinomycetota</taxon>
        <taxon>Actinomycetes</taxon>
        <taxon>Micromonosporales</taxon>
        <taxon>Micromonosporaceae</taxon>
        <taxon>Salinispora</taxon>
    </lineage>
</organism>
<evidence type="ECO:0000255" key="1">
    <source>
        <dbReference type="HAMAP-Rule" id="MF_01031"/>
    </source>
</evidence>
<feature type="chain" id="PRO_1000084262" description="3-isopropylmalate dehydratase small subunit">
    <location>
        <begin position="1"/>
        <end position="195"/>
    </location>
</feature>
<sequence>MEKFTIHTGTAAPLRRSNVDTDQIIPAVYLKRVTRTGFADGLFSGWREDQGFVLNDESYSDASILVAGPEFGTGSSREHAVWALRDWGFRAVLSPRFGDIFRGNALKGGLLPVELELEAIEEIWNRVEADPRTPVTVDLDARQVRVGEATWSFALDEFSRWRLMEGLDDIGLTLRHEVVIGDFEASRPPFLPTVT</sequence>
<protein>
    <recommendedName>
        <fullName evidence="1">3-isopropylmalate dehydratase small subunit</fullName>
        <ecNumber evidence="1">4.2.1.33</ecNumber>
    </recommendedName>
    <alternativeName>
        <fullName evidence="1">Alpha-IPM isomerase</fullName>
        <shortName evidence="1">IPMI</shortName>
    </alternativeName>
    <alternativeName>
        <fullName evidence="1">Isopropylmalate isomerase</fullName>
    </alternativeName>
</protein>
<name>LEUD_SALAI</name>
<keyword id="KW-0028">Amino-acid biosynthesis</keyword>
<keyword id="KW-0100">Branched-chain amino acid biosynthesis</keyword>
<keyword id="KW-0432">Leucine biosynthesis</keyword>
<keyword id="KW-0456">Lyase</keyword>
<accession>A8M5I4</accession>
<comment type="function">
    <text evidence="1">Catalyzes the isomerization between 2-isopropylmalate and 3-isopropylmalate, via the formation of 2-isopropylmaleate.</text>
</comment>
<comment type="catalytic activity">
    <reaction evidence="1">
        <text>(2R,3S)-3-isopropylmalate = (2S)-2-isopropylmalate</text>
        <dbReference type="Rhea" id="RHEA:32287"/>
        <dbReference type="ChEBI" id="CHEBI:1178"/>
        <dbReference type="ChEBI" id="CHEBI:35121"/>
        <dbReference type="EC" id="4.2.1.33"/>
    </reaction>
</comment>
<comment type="pathway">
    <text evidence="1">Amino-acid biosynthesis; L-leucine biosynthesis; L-leucine from 3-methyl-2-oxobutanoate: step 2/4.</text>
</comment>
<comment type="subunit">
    <text evidence="1">Heterodimer of LeuC and LeuD.</text>
</comment>
<comment type="similarity">
    <text evidence="1">Belongs to the LeuD family. LeuD type 1 subfamily.</text>
</comment>
<reference key="1">
    <citation type="submission" date="2007-10" db="EMBL/GenBank/DDBJ databases">
        <title>Complete sequence of Salinispora arenicola CNS-205.</title>
        <authorList>
            <consortium name="US DOE Joint Genome Institute"/>
            <person name="Copeland A."/>
            <person name="Lucas S."/>
            <person name="Lapidus A."/>
            <person name="Barry K."/>
            <person name="Glavina del Rio T."/>
            <person name="Dalin E."/>
            <person name="Tice H."/>
            <person name="Pitluck S."/>
            <person name="Foster B."/>
            <person name="Schmutz J."/>
            <person name="Larimer F."/>
            <person name="Land M."/>
            <person name="Hauser L."/>
            <person name="Kyrpides N."/>
            <person name="Ivanova N."/>
            <person name="Jensen P.R."/>
            <person name="Moore B.S."/>
            <person name="Penn K."/>
            <person name="Jenkins C."/>
            <person name="Udwary D."/>
            <person name="Xiang L."/>
            <person name="Gontang E."/>
            <person name="Richardson P."/>
        </authorList>
    </citation>
    <scope>NUCLEOTIDE SEQUENCE [LARGE SCALE GENOMIC DNA]</scope>
    <source>
        <strain>CNS-205</strain>
    </source>
</reference>